<accession>Q9HVA2</accession>
<proteinExistence type="evidence at protein level"/>
<evidence type="ECO:0000255" key="1">
    <source>
        <dbReference type="HAMAP-Rule" id="MF_00435"/>
    </source>
</evidence>
<evidence type="ECO:0000255" key="2">
    <source>
        <dbReference type="PROSITE-ProRule" id="PRU01197"/>
    </source>
</evidence>
<evidence type="ECO:0000255" key="3">
    <source>
        <dbReference type="PROSITE-ProRule" id="PRU01198"/>
    </source>
</evidence>
<evidence type="ECO:0000269" key="4">
    <source>
    </source>
</evidence>
<evidence type="ECO:0000303" key="5">
    <source>
    </source>
</evidence>
<evidence type="ECO:0000305" key="6">
    <source>
    </source>
</evidence>
<evidence type="ECO:0007829" key="7">
    <source>
        <dbReference type="PDB" id="1NP3"/>
    </source>
</evidence>
<keyword id="KW-0002">3D-structure</keyword>
<keyword id="KW-0028">Amino-acid biosynthesis</keyword>
<keyword id="KW-0100">Branched-chain amino acid biosynthesis</keyword>
<keyword id="KW-0460">Magnesium</keyword>
<keyword id="KW-0479">Metal-binding</keyword>
<keyword id="KW-0521">NADP</keyword>
<keyword id="KW-0560">Oxidoreductase</keyword>
<keyword id="KW-1185">Reference proteome</keyword>
<reference key="1">
    <citation type="journal article" date="2000" name="Nature">
        <title>Complete genome sequence of Pseudomonas aeruginosa PAO1, an opportunistic pathogen.</title>
        <authorList>
            <person name="Stover C.K."/>
            <person name="Pham X.-Q.T."/>
            <person name="Erwin A.L."/>
            <person name="Mizoguchi S.D."/>
            <person name="Warrener P."/>
            <person name="Hickey M.J."/>
            <person name="Brinkman F.S.L."/>
            <person name="Hufnagle W.O."/>
            <person name="Kowalik D.J."/>
            <person name="Lagrou M."/>
            <person name="Garber R.L."/>
            <person name="Goltry L."/>
            <person name="Tolentino E."/>
            <person name="Westbrock-Wadman S."/>
            <person name="Yuan Y."/>
            <person name="Brody L.L."/>
            <person name="Coulter S.N."/>
            <person name="Folger K.R."/>
            <person name="Kas A."/>
            <person name="Larbig K."/>
            <person name="Lim R.M."/>
            <person name="Smith K.A."/>
            <person name="Spencer D.H."/>
            <person name="Wong G.K.-S."/>
            <person name="Wu Z."/>
            <person name="Paulsen I.T."/>
            <person name="Reizer J."/>
            <person name="Saier M.H. Jr."/>
            <person name="Hancock R.E.W."/>
            <person name="Lory S."/>
            <person name="Olson M.V."/>
        </authorList>
    </citation>
    <scope>NUCLEOTIDE SEQUENCE [LARGE SCALE GENOMIC DNA]</scope>
    <source>
        <strain>ATCC 15692 / DSM 22644 / CIP 104116 / JCM 14847 / LMG 12228 / 1C / PRS 101 / PAO1</strain>
    </source>
</reference>
<reference key="2">
    <citation type="journal article" date="2003" name="J. Mol. Biol.">
        <title>Crystal structure of class I acetohydroxy acid isomeroreductase from Pseudomonas aeruginosa.</title>
        <authorList>
            <person name="Ahn H.J."/>
            <person name="Eom S.J."/>
            <person name="Yoon H.J."/>
            <person name="Lee B.I."/>
            <person name="Cho H."/>
            <person name="Suh S.W."/>
        </authorList>
    </citation>
    <scope>X-RAY CRYSTALLOGRAPHY (2.00 ANGSTROMS)</scope>
    <scope>SUBUNIT</scope>
</reference>
<feature type="chain" id="PRO_0000151342" description="Ketol-acid reductoisomerase (NADP(+))">
    <location>
        <begin position="1"/>
        <end position="338"/>
    </location>
</feature>
<feature type="domain" description="KARI N-terminal Rossmann" evidence="2 6">
    <location>
        <begin position="1"/>
        <end position="181"/>
    </location>
</feature>
<feature type="domain" description="KARI C-terminal knotted" evidence="3 6">
    <location>
        <begin position="182"/>
        <end position="327"/>
    </location>
</feature>
<feature type="active site" evidence="1">
    <location>
        <position position="107"/>
    </location>
</feature>
<feature type="binding site" evidence="1">
    <location>
        <begin position="24"/>
        <end position="27"/>
    </location>
    <ligand>
        <name>NADP(+)</name>
        <dbReference type="ChEBI" id="CHEBI:58349"/>
    </ligand>
</feature>
<feature type="binding site" evidence="1">
    <location>
        <position position="47"/>
    </location>
    <ligand>
        <name>NADP(+)</name>
        <dbReference type="ChEBI" id="CHEBI:58349"/>
    </ligand>
</feature>
<feature type="binding site" evidence="1">
    <location>
        <position position="50"/>
    </location>
    <ligand>
        <name>NADP(+)</name>
        <dbReference type="ChEBI" id="CHEBI:58349"/>
    </ligand>
</feature>
<feature type="binding site" evidence="1">
    <location>
        <position position="52"/>
    </location>
    <ligand>
        <name>NADP(+)</name>
        <dbReference type="ChEBI" id="CHEBI:58349"/>
    </ligand>
</feature>
<feature type="binding site" evidence="1">
    <location>
        <begin position="82"/>
        <end position="85"/>
    </location>
    <ligand>
        <name>NADP(+)</name>
        <dbReference type="ChEBI" id="CHEBI:58349"/>
    </ligand>
</feature>
<feature type="binding site" evidence="1">
    <location>
        <position position="133"/>
    </location>
    <ligand>
        <name>NADP(+)</name>
        <dbReference type="ChEBI" id="CHEBI:58349"/>
    </ligand>
</feature>
<feature type="binding site" evidence="1">
    <location>
        <position position="190"/>
    </location>
    <ligand>
        <name>Mg(2+)</name>
        <dbReference type="ChEBI" id="CHEBI:18420"/>
        <label>1</label>
    </ligand>
</feature>
<feature type="binding site" evidence="1">
    <location>
        <position position="190"/>
    </location>
    <ligand>
        <name>Mg(2+)</name>
        <dbReference type="ChEBI" id="CHEBI:18420"/>
        <label>2</label>
    </ligand>
</feature>
<feature type="binding site" evidence="1">
    <location>
        <position position="194"/>
    </location>
    <ligand>
        <name>Mg(2+)</name>
        <dbReference type="ChEBI" id="CHEBI:18420"/>
        <label>1</label>
    </ligand>
</feature>
<feature type="binding site" evidence="1">
    <location>
        <position position="226"/>
    </location>
    <ligand>
        <name>Mg(2+)</name>
        <dbReference type="ChEBI" id="CHEBI:18420"/>
        <label>2</label>
    </ligand>
</feature>
<feature type="binding site" evidence="1">
    <location>
        <position position="230"/>
    </location>
    <ligand>
        <name>Mg(2+)</name>
        <dbReference type="ChEBI" id="CHEBI:18420"/>
        <label>2</label>
    </ligand>
</feature>
<feature type="binding site" evidence="1">
    <location>
        <position position="251"/>
    </location>
    <ligand>
        <name>substrate</name>
    </ligand>
</feature>
<feature type="helix" evidence="7">
    <location>
        <begin position="6"/>
        <end position="8"/>
    </location>
</feature>
<feature type="helix" evidence="7">
    <location>
        <begin position="11"/>
        <end position="15"/>
    </location>
</feature>
<feature type="strand" evidence="7">
    <location>
        <begin position="19"/>
        <end position="22"/>
    </location>
</feature>
<feature type="helix" evidence="7">
    <location>
        <begin position="26"/>
        <end position="37"/>
    </location>
</feature>
<feature type="strand" evidence="7">
    <location>
        <begin position="42"/>
        <end position="45"/>
    </location>
</feature>
<feature type="helix" evidence="7">
    <location>
        <begin position="51"/>
        <end position="58"/>
    </location>
</feature>
<feature type="strand" evidence="7">
    <location>
        <begin position="62"/>
        <end position="64"/>
    </location>
</feature>
<feature type="helix" evidence="7">
    <location>
        <begin position="66"/>
        <end position="71"/>
    </location>
</feature>
<feature type="strand" evidence="7">
    <location>
        <begin position="74"/>
        <end position="78"/>
    </location>
</feature>
<feature type="helix" evidence="7">
    <location>
        <begin position="82"/>
        <end position="92"/>
    </location>
</feature>
<feature type="helix" evidence="7">
    <location>
        <begin position="94"/>
        <end position="96"/>
    </location>
</feature>
<feature type="strand" evidence="7">
    <location>
        <begin position="102"/>
        <end position="106"/>
    </location>
</feature>
<feature type="helix" evidence="7">
    <location>
        <begin position="109"/>
        <end position="112"/>
    </location>
</feature>
<feature type="strand" evidence="7">
    <location>
        <begin position="123"/>
        <end position="131"/>
    </location>
</feature>
<feature type="helix" evidence="7">
    <location>
        <begin position="134"/>
        <end position="141"/>
    </location>
</feature>
<feature type="strand" evidence="7">
    <location>
        <begin position="148"/>
        <end position="154"/>
    </location>
</feature>
<feature type="strand" evidence="7">
    <location>
        <begin position="156"/>
        <end position="158"/>
    </location>
</feature>
<feature type="helix" evidence="7">
    <location>
        <begin position="160"/>
        <end position="170"/>
    </location>
</feature>
<feature type="helix" evidence="7">
    <location>
        <begin position="173"/>
        <end position="176"/>
    </location>
</feature>
<feature type="strand" evidence="7">
    <location>
        <begin position="178"/>
        <end position="180"/>
    </location>
</feature>
<feature type="helix" evidence="7">
    <location>
        <begin position="183"/>
        <end position="196"/>
    </location>
</feature>
<feature type="turn" evidence="7">
    <location>
        <begin position="197"/>
        <end position="199"/>
    </location>
</feature>
<feature type="helix" evidence="7">
    <location>
        <begin position="200"/>
        <end position="215"/>
    </location>
</feature>
<feature type="helix" evidence="7">
    <location>
        <begin position="220"/>
        <end position="227"/>
    </location>
</feature>
<feature type="turn" evidence="7">
    <location>
        <begin position="228"/>
        <end position="230"/>
    </location>
</feature>
<feature type="helix" evidence="7">
    <location>
        <begin position="231"/>
        <end position="249"/>
    </location>
</feature>
<feature type="helix" evidence="7">
    <location>
        <begin position="252"/>
        <end position="265"/>
    </location>
</feature>
<feature type="helix" evidence="7">
    <location>
        <begin position="268"/>
        <end position="282"/>
    </location>
</feature>
<feature type="helix" evidence="7">
    <location>
        <begin position="285"/>
        <end position="295"/>
    </location>
</feature>
<feature type="helix" evidence="7">
    <location>
        <begin position="299"/>
        <end position="310"/>
    </location>
</feature>
<feature type="helix" evidence="7">
    <location>
        <begin position="312"/>
        <end position="321"/>
    </location>
</feature>
<sequence length="338" mass="36425">MRVFYDKDCDLSIIQGKKVAIIGYGSQGHAHACNLKDSGVDVTVGLRSGSATVAKAEAHGLKVADVKTAVAAADVVMILTPDEFQGRLYKEEIEPNLKKGATLAFAHGFSIHYNQVVPRADLDVIMIAPKAPGHTVRSEFVKGGGIPDLIAIYQDASGNAKNVALSYACGVGGGRTGIIETTFKDETETDLFGEQAVLCGGCVELVKAGFETLVEAGYAPEMAYFECLHELKLIVDLMYEGGIANMNYSISNNAEYGEYVTGPEVINAESRAAMRNALKRIQDGEYAKMFITEGAANYPSMTAYRRNNAAHPIEQIGEKLRAMMPWIAANKIVDKSKN</sequence>
<comment type="function">
    <text evidence="1">Involved in the biosynthesis of branched-chain amino acids (BCAA). Catalyzes an alkyl-migration followed by a ketol-acid reduction of (S)-2-acetolactate (S2AL) to yield (R)-2,3-dihydroxy-isovalerate. In the isomerase reaction, S2AL is rearranged via a Mg-dependent methyl migration to produce 3-hydroxy-3-methyl-2-ketobutyrate (HMKB). In the reductase reaction, this 2-ketoacid undergoes a metal-dependent reduction by NADPH to yield (R)-2,3-dihydroxy-isovalerate.</text>
</comment>
<comment type="catalytic activity">
    <reaction evidence="1">
        <text>(2R)-2,3-dihydroxy-3-methylbutanoate + NADP(+) = (2S)-2-acetolactate + NADPH + H(+)</text>
        <dbReference type="Rhea" id="RHEA:22068"/>
        <dbReference type="ChEBI" id="CHEBI:15378"/>
        <dbReference type="ChEBI" id="CHEBI:49072"/>
        <dbReference type="ChEBI" id="CHEBI:57783"/>
        <dbReference type="ChEBI" id="CHEBI:58349"/>
        <dbReference type="ChEBI" id="CHEBI:58476"/>
        <dbReference type="EC" id="1.1.1.86"/>
    </reaction>
</comment>
<comment type="catalytic activity">
    <reaction evidence="1">
        <text>(2R,3R)-2,3-dihydroxy-3-methylpentanoate + NADP(+) = (S)-2-ethyl-2-hydroxy-3-oxobutanoate + NADPH + H(+)</text>
        <dbReference type="Rhea" id="RHEA:13493"/>
        <dbReference type="ChEBI" id="CHEBI:15378"/>
        <dbReference type="ChEBI" id="CHEBI:49256"/>
        <dbReference type="ChEBI" id="CHEBI:49258"/>
        <dbReference type="ChEBI" id="CHEBI:57783"/>
        <dbReference type="ChEBI" id="CHEBI:58349"/>
        <dbReference type="EC" id="1.1.1.86"/>
    </reaction>
</comment>
<comment type="cofactor">
    <cofactor evidence="1">
        <name>Mg(2+)</name>
        <dbReference type="ChEBI" id="CHEBI:18420"/>
    </cofactor>
    <text evidence="1">Binds 2 magnesium ions per subunit.</text>
</comment>
<comment type="pathway">
    <text evidence="1">Amino-acid biosynthesis; L-isoleucine biosynthesis; L-isoleucine from 2-oxobutanoate: step 2/4.</text>
</comment>
<comment type="pathway">
    <text evidence="1">Amino-acid biosynthesis; L-valine biosynthesis; L-valine from pyruvate: step 2/4.</text>
</comment>
<comment type="subunit">
    <text evidence="4">Dodecamer.</text>
</comment>
<comment type="similarity">
    <text evidence="1">Belongs to the ketol-acid reductoisomerase family.</text>
</comment>
<protein>
    <recommendedName>
        <fullName evidence="1">Ketol-acid reductoisomerase (NADP(+))</fullName>
        <shortName evidence="1">KARI</shortName>
        <ecNumber evidence="1">1.1.1.86</ecNumber>
    </recommendedName>
    <alternativeName>
        <fullName evidence="5">Acetohydroxy-acid isomeroreductase</fullName>
        <shortName evidence="1">AHIR</shortName>
    </alternativeName>
    <alternativeName>
        <fullName evidence="1">Alpha-keto-beta-hydroxylacyl reductoisomerase</fullName>
    </alternativeName>
    <alternativeName>
        <fullName evidence="5">Ketol-acid reductoisomerase type 1</fullName>
    </alternativeName>
    <alternativeName>
        <fullName evidence="5">Ketol-acid reductoisomerase type I</fullName>
    </alternativeName>
</protein>
<gene>
    <name type="primary">ilvC</name>
    <name type="ordered locus">PA4694</name>
</gene>
<name>ILVC_PSEAE</name>
<dbReference type="EC" id="1.1.1.86" evidence="1"/>
<dbReference type="EMBL" id="AE004091">
    <property type="protein sequence ID" value="AAG08080.1"/>
    <property type="molecule type" value="Genomic_DNA"/>
</dbReference>
<dbReference type="PIR" id="E83059">
    <property type="entry name" value="E83059"/>
</dbReference>
<dbReference type="RefSeq" id="NP_253382.1">
    <property type="nucleotide sequence ID" value="NC_002516.2"/>
</dbReference>
<dbReference type="RefSeq" id="WP_003095066.1">
    <property type="nucleotide sequence ID" value="NZ_QZGE01000018.1"/>
</dbReference>
<dbReference type="PDB" id="1NP3">
    <property type="method" value="X-ray"/>
    <property type="resolution" value="2.00 A"/>
    <property type="chains" value="A/B/C/D=1-338"/>
</dbReference>
<dbReference type="PDBsum" id="1NP3"/>
<dbReference type="SMR" id="Q9HVA2"/>
<dbReference type="FunCoup" id="Q9HVA2">
    <property type="interactions" value="665"/>
</dbReference>
<dbReference type="STRING" id="208964.PA4694"/>
<dbReference type="PaxDb" id="208964-PA4694"/>
<dbReference type="GeneID" id="881483"/>
<dbReference type="KEGG" id="pae:PA4694"/>
<dbReference type="PATRIC" id="fig|208964.12.peg.4917"/>
<dbReference type="PseudoCAP" id="PA4694"/>
<dbReference type="HOGENOM" id="CLU_033821_0_1_6"/>
<dbReference type="InParanoid" id="Q9HVA2"/>
<dbReference type="OrthoDB" id="9804088at2"/>
<dbReference type="PhylomeDB" id="Q9HVA2"/>
<dbReference type="BioCyc" id="PAER208964:G1FZ6-4798-MONOMER"/>
<dbReference type="UniPathway" id="UPA00047">
    <property type="reaction ID" value="UER00056"/>
</dbReference>
<dbReference type="UniPathway" id="UPA00049">
    <property type="reaction ID" value="UER00060"/>
</dbReference>
<dbReference type="EvolutionaryTrace" id="Q9HVA2"/>
<dbReference type="Proteomes" id="UP000002438">
    <property type="component" value="Chromosome"/>
</dbReference>
<dbReference type="GO" id="GO:0005829">
    <property type="term" value="C:cytosol"/>
    <property type="evidence" value="ECO:0000318"/>
    <property type="project" value="GO_Central"/>
</dbReference>
<dbReference type="GO" id="GO:0004455">
    <property type="term" value="F:ketol-acid reductoisomerase activity"/>
    <property type="evidence" value="ECO:0000318"/>
    <property type="project" value="GO_Central"/>
</dbReference>
<dbReference type="GO" id="GO:0000287">
    <property type="term" value="F:magnesium ion binding"/>
    <property type="evidence" value="ECO:0007669"/>
    <property type="project" value="UniProtKB-UniRule"/>
</dbReference>
<dbReference type="GO" id="GO:0050661">
    <property type="term" value="F:NADP binding"/>
    <property type="evidence" value="ECO:0007669"/>
    <property type="project" value="InterPro"/>
</dbReference>
<dbReference type="GO" id="GO:0009097">
    <property type="term" value="P:isoleucine biosynthetic process"/>
    <property type="evidence" value="ECO:0000318"/>
    <property type="project" value="GO_Central"/>
</dbReference>
<dbReference type="GO" id="GO:0009099">
    <property type="term" value="P:L-valine biosynthetic process"/>
    <property type="evidence" value="ECO:0000318"/>
    <property type="project" value="GO_Central"/>
</dbReference>
<dbReference type="FunFam" id="3.40.50.720:FF:000023">
    <property type="entry name" value="Ketol-acid reductoisomerase (NADP(+))"/>
    <property type="match status" value="1"/>
</dbReference>
<dbReference type="Gene3D" id="6.10.240.10">
    <property type="match status" value="1"/>
</dbReference>
<dbReference type="Gene3D" id="3.40.50.720">
    <property type="entry name" value="NAD(P)-binding Rossmann-like Domain"/>
    <property type="match status" value="1"/>
</dbReference>
<dbReference type="HAMAP" id="MF_00435">
    <property type="entry name" value="IlvC"/>
    <property type="match status" value="1"/>
</dbReference>
<dbReference type="InterPro" id="IPR008927">
    <property type="entry name" value="6-PGluconate_DH-like_C_sf"/>
</dbReference>
<dbReference type="InterPro" id="IPR013023">
    <property type="entry name" value="KARI"/>
</dbReference>
<dbReference type="InterPro" id="IPR000506">
    <property type="entry name" value="KARI_C"/>
</dbReference>
<dbReference type="InterPro" id="IPR013116">
    <property type="entry name" value="KARI_N"/>
</dbReference>
<dbReference type="InterPro" id="IPR014359">
    <property type="entry name" value="KARI_prok"/>
</dbReference>
<dbReference type="InterPro" id="IPR036291">
    <property type="entry name" value="NAD(P)-bd_dom_sf"/>
</dbReference>
<dbReference type="NCBIfam" id="TIGR00465">
    <property type="entry name" value="ilvC"/>
    <property type="match status" value="1"/>
</dbReference>
<dbReference type="NCBIfam" id="NF004017">
    <property type="entry name" value="PRK05479.1"/>
    <property type="match status" value="1"/>
</dbReference>
<dbReference type="NCBIfam" id="NF009940">
    <property type="entry name" value="PRK13403.1"/>
    <property type="match status" value="1"/>
</dbReference>
<dbReference type="PANTHER" id="PTHR21371">
    <property type="entry name" value="KETOL-ACID REDUCTOISOMERASE, MITOCHONDRIAL"/>
    <property type="match status" value="1"/>
</dbReference>
<dbReference type="PANTHER" id="PTHR21371:SF1">
    <property type="entry name" value="KETOL-ACID REDUCTOISOMERASE, MITOCHONDRIAL"/>
    <property type="match status" value="1"/>
</dbReference>
<dbReference type="Pfam" id="PF01450">
    <property type="entry name" value="KARI_C"/>
    <property type="match status" value="1"/>
</dbReference>
<dbReference type="Pfam" id="PF07991">
    <property type="entry name" value="KARI_N"/>
    <property type="match status" value="1"/>
</dbReference>
<dbReference type="PIRSF" id="PIRSF000116">
    <property type="entry name" value="IlvC_gammaproteo"/>
    <property type="match status" value="1"/>
</dbReference>
<dbReference type="SUPFAM" id="SSF48179">
    <property type="entry name" value="6-phosphogluconate dehydrogenase C-terminal domain-like"/>
    <property type="match status" value="1"/>
</dbReference>
<dbReference type="SUPFAM" id="SSF51735">
    <property type="entry name" value="NAD(P)-binding Rossmann-fold domains"/>
    <property type="match status" value="1"/>
</dbReference>
<dbReference type="PROSITE" id="PS51851">
    <property type="entry name" value="KARI_C"/>
    <property type="match status" value="1"/>
</dbReference>
<dbReference type="PROSITE" id="PS51850">
    <property type="entry name" value="KARI_N"/>
    <property type="match status" value="1"/>
</dbReference>
<organism>
    <name type="scientific">Pseudomonas aeruginosa (strain ATCC 15692 / DSM 22644 / CIP 104116 / JCM 14847 / LMG 12228 / 1C / PRS 101 / PAO1)</name>
    <dbReference type="NCBI Taxonomy" id="208964"/>
    <lineage>
        <taxon>Bacteria</taxon>
        <taxon>Pseudomonadati</taxon>
        <taxon>Pseudomonadota</taxon>
        <taxon>Gammaproteobacteria</taxon>
        <taxon>Pseudomonadales</taxon>
        <taxon>Pseudomonadaceae</taxon>
        <taxon>Pseudomonas</taxon>
    </lineage>
</organism>